<evidence type="ECO:0000255" key="1">
    <source>
        <dbReference type="HAMAP-Rule" id="MF_00021"/>
    </source>
</evidence>
<name>THII_METMA</name>
<comment type="function">
    <text evidence="1">Catalyzes the ATP-dependent transfer of a sulfur to tRNA to produce 4-thiouridine in position 8 of tRNAs, which functions as a near-UV photosensor. Also catalyzes the transfer of sulfur to the sulfur carrier protein ThiS, forming ThiS-thiocarboxylate. This is a step in the synthesis of thiazole, in the thiamine biosynthesis pathway. The sulfur is donated as persulfide by IscS.</text>
</comment>
<comment type="catalytic activity">
    <reaction evidence="1">
        <text>[ThiI sulfur-carrier protein]-S-sulfanyl-L-cysteine + a uridine in tRNA + 2 reduced [2Fe-2S]-[ferredoxin] + ATP + H(+) = [ThiI sulfur-carrier protein]-L-cysteine + a 4-thiouridine in tRNA + 2 oxidized [2Fe-2S]-[ferredoxin] + AMP + diphosphate</text>
        <dbReference type="Rhea" id="RHEA:24176"/>
        <dbReference type="Rhea" id="RHEA-COMP:10000"/>
        <dbReference type="Rhea" id="RHEA-COMP:10001"/>
        <dbReference type="Rhea" id="RHEA-COMP:13337"/>
        <dbReference type="Rhea" id="RHEA-COMP:13338"/>
        <dbReference type="Rhea" id="RHEA-COMP:13339"/>
        <dbReference type="Rhea" id="RHEA-COMP:13340"/>
        <dbReference type="ChEBI" id="CHEBI:15378"/>
        <dbReference type="ChEBI" id="CHEBI:29950"/>
        <dbReference type="ChEBI" id="CHEBI:30616"/>
        <dbReference type="ChEBI" id="CHEBI:33019"/>
        <dbReference type="ChEBI" id="CHEBI:33737"/>
        <dbReference type="ChEBI" id="CHEBI:33738"/>
        <dbReference type="ChEBI" id="CHEBI:61963"/>
        <dbReference type="ChEBI" id="CHEBI:65315"/>
        <dbReference type="ChEBI" id="CHEBI:136798"/>
        <dbReference type="ChEBI" id="CHEBI:456215"/>
        <dbReference type="EC" id="2.8.1.4"/>
    </reaction>
</comment>
<comment type="catalytic activity">
    <reaction evidence="1">
        <text>[ThiS sulfur-carrier protein]-C-terminal Gly-Gly-AMP + S-sulfanyl-L-cysteinyl-[cysteine desulfurase] + AH2 = [ThiS sulfur-carrier protein]-C-terminal-Gly-aminoethanethioate + L-cysteinyl-[cysteine desulfurase] + A + AMP + 2 H(+)</text>
        <dbReference type="Rhea" id="RHEA:43340"/>
        <dbReference type="Rhea" id="RHEA-COMP:12157"/>
        <dbReference type="Rhea" id="RHEA-COMP:12158"/>
        <dbReference type="Rhea" id="RHEA-COMP:12910"/>
        <dbReference type="Rhea" id="RHEA-COMP:19908"/>
        <dbReference type="ChEBI" id="CHEBI:13193"/>
        <dbReference type="ChEBI" id="CHEBI:15378"/>
        <dbReference type="ChEBI" id="CHEBI:17499"/>
        <dbReference type="ChEBI" id="CHEBI:29950"/>
        <dbReference type="ChEBI" id="CHEBI:61963"/>
        <dbReference type="ChEBI" id="CHEBI:90618"/>
        <dbReference type="ChEBI" id="CHEBI:232372"/>
        <dbReference type="ChEBI" id="CHEBI:456215"/>
    </reaction>
</comment>
<comment type="pathway">
    <text evidence="1">Cofactor biosynthesis; thiamine diphosphate biosynthesis.</text>
</comment>
<comment type="subcellular location">
    <subcellularLocation>
        <location evidence="1">Cytoplasm</location>
    </subcellularLocation>
</comment>
<comment type="similarity">
    <text evidence="1">Belongs to the ThiI family.</text>
</comment>
<reference key="1">
    <citation type="journal article" date="2002" name="J. Mol. Microbiol. Biotechnol.">
        <title>The genome of Methanosarcina mazei: evidence for lateral gene transfer between Bacteria and Archaea.</title>
        <authorList>
            <person name="Deppenmeier U."/>
            <person name="Johann A."/>
            <person name="Hartsch T."/>
            <person name="Merkl R."/>
            <person name="Schmitz R.A."/>
            <person name="Martinez-Arias R."/>
            <person name="Henne A."/>
            <person name="Wiezer A."/>
            <person name="Baeumer S."/>
            <person name="Jacobi C."/>
            <person name="Brueggemann H."/>
            <person name="Lienard T."/>
            <person name="Christmann A."/>
            <person name="Boemecke M."/>
            <person name="Steckel S."/>
            <person name="Bhattacharyya A."/>
            <person name="Lykidis A."/>
            <person name="Overbeek R."/>
            <person name="Klenk H.-P."/>
            <person name="Gunsalus R.P."/>
            <person name="Fritz H.-J."/>
            <person name="Gottschalk G."/>
        </authorList>
    </citation>
    <scope>NUCLEOTIDE SEQUENCE [LARGE SCALE GENOMIC DNA]</scope>
    <source>
        <strain>ATCC BAA-159 / DSM 3647 / Goe1 / Go1 / JCM 11833 / OCM 88</strain>
    </source>
</reference>
<protein>
    <recommendedName>
        <fullName evidence="1">Probable tRNA sulfurtransferase</fullName>
        <ecNumber evidence="1">2.8.1.4</ecNumber>
    </recommendedName>
    <alternativeName>
        <fullName evidence="1">Sulfur carrier protein ThiS sulfurtransferase</fullName>
    </alternativeName>
    <alternativeName>
        <fullName evidence="1">Thiamine biosynthesis protein ThiI</fullName>
    </alternativeName>
    <alternativeName>
        <fullName evidence="1">tRNA 4-thiouridine synthase</fullName>
    </alternativeName>
</protein>
<gene>
    <name evidence="1" type="primary">thiI</name>
    <name type="ordered locus">MM_2517</name>
</gene>
<keyword id="KW-0067">ATP-binding</keyword>
<keyword id="KW-0963">Cytoplasm</keyword>
<keyword id="KW-0547">Nucleotide-binding</keyword>
<keyword id="KW-0694">RNA-binding</keyword>
<keyword id="KW-0784">Thiamine biosynthesis</keyword>
<keyword id="KW-0808">Transferase</keyword>
<keyword id="KW-0820">tRNA-binding</keyword>
<accession>Q8PU39</accession>
<dbReference type="EC" id="2.8.1.4" evidence="1"/>
<dbReference type="EMBL" id="AE008384">
    <property type="protein sequence ID" value="AAM32213.1"/>
    <property type="molecule type" value="Genomic_DNA"/>
</dbReference>
<dbReference type="RefSeq" id="WP_011034434.1">
    <property type="nucleotide sequence ID" value="NC_003901.1"/>
</dbReference>
<dbReference type="SMR" id="Q8PU39"/>
<dbReference type="GeneID" id="82161595"/>
<dbReference type="KEGG" id="mma:MM_2517"/>
<dbReference type="PATRIC" id="fig|192952.21.peg.2881"/>
<dbReference type="eggNOG" id="arCOG00038">
    <property type="taxonomic scope" value="Archaea"/>
</dbReference>
<dbReference type="HOGENOM" id="CLU_037952_4_0_2"/>
<dbReference type="UniPathway" id="UPA00060"/>
<dbReference type="Proteomes" id="UP000000595">
    <property type="component" value="Chromosome"/>
</dbReference>
<dbReference type="GO" id="GO:0005829">
    <property type="term" value="C:cytosol"/>
    <property type="evidence" value="ECO:0007669"/>
    <property type="project" value="TreeGrafter"/>
</dbReference>
<dbReference type="GO" id="GO:0005524">
    <property type="term" value="F:ATP binding"/>
    <property type="evidence" value="ECO:0007669"/>
    <property type="project" value="UniProtKB-UniRule"/>
</dbReference>
<dbReference type="GO" id="GO:0004810">
    <property type="term" value="F:CCA tRNA nucleotidyltransferase activity"/>
    <property type="evidence" value="ECO:0007669"/>
    <property type="project" value="InterPro"/>
</dbReference>
<dbReference type="GO" id="GO:0000049">
    <property type="term" value="F:tRNA binding"/>
    <property type="evidence" value="ECO:0007669"/>
    <property type="project" value="UniProtKB-UniRule"/>
</dbReference>
<dbReference type="GO" id="GO:0140741">
    <property type="term" value="F:tRNA-uracil-4 sulfurtransferase activity"/>
    <property type="evidence" value="ECO:0007669"/>
    <property type="project" value="UniProtKB-EC"/>
</dbReference>
<dbReference type="GO" id="GO:0009228">
    <property type="term" value="P:thiamine biosynthetic process"/>
    <property type="evidence" value="ECO:0007669"/>
    <property type="project" value="UniProtKB-KW"/>
</dbReference>
<dbReference type="GO" id="GO:0009229">
    <property type="term" value="P:thiamine diphosphate biosynthetic process"/>
    <property type="evidence" value="ECO:0007669"/>
    <property type="project" value="UniProtKB-UniRule"/>
</dbReference>
<dbReference type="GO" id="GO:0052837">
    <property type="term" value="P:thiazole biosynthetic process"/>
    <property type="evidence" value="ECO:0007669"/>
    <property type="project" value="TreeGrafter"/>
</dbReference>
<dbReference type="GO" id="GO:0002937">
    <property type="term" value="P:tRNA 4-thiouridine biosynthesis"/>
    <property type="evidence" value="ECO:0007669"/>
    <property type="project" value="TreeGrafter"/>
</dbReference>
<dbReference type="CDD" id="cd01712">
    <property type="entry name" value="PPase_ThiI"/>
    <property type="match status" value="1"/>
</dbReference>
<dbReference type="CDD" id="cd11716">
    <property type="entry name" value="THUMP_ThiI"/>
    <property type="match status" value="1"/>
</dbReference>
<dbReference type="FunFam" id="3.40.50.620:FF:000053">
    <property type="entry name" value="Probable tRNA sulfurtransferase"/>
    <property type="match status" value="1"/>
</dbReference>
<dbReference type="Gene3D" id="3.30.2130.30">
    <property type="match status" value="1"/>
</dbReference>
<dbReference type="Gene3D" id="3.40.50.620">
    <property type="entry name" value="HUPs"/>
    <property type="match status" value="1"/>
</dbReference>
<dbReference type="HAMAP" id="MF_00021">
    <property type="entry name" value="ThiI"/>
    <property type="match status" value="1"/>
</dbReference>
<dbReference type="InterPro" id="IPR014729">
    <property type="entry name" value="Rossmann-like_a/b/a_fold"/>
</dbReference>
<dbReference type="InterPro" id="IPR020536">
    <property type="entry name" value="ThiI_AANH"/>
</dbReference>
<dbReference type="InterPro" id="IPR054173">
    <property type="entry name" value="ThiI_fer"/>
</dbReference>
<dbReference type="InterPro" id="IPR049961">
    <property type="entry name" value="ThiI_N"/>
</dbReference>
<dbReference type="InterPro" id="IPR004114">
    <property type="entry name" value="THUMP_dom"/>
</dbReference>
<dbReference type="InterPro" id="IPR049962">
    <property type="entry name" value="THUMP_ThiI"/>
</dbReference>
<dbReference type="InterPro" id="IPR003720">
    <property type="entry name" value="tRNA_STrfase"/>
</dbReference>
<dbReference type="InterPro" id="IPR050102">
    <property type="entry name" value="tRNA_sulfurtransferase_ThiI"/>
</dbReference>
<dbReference type="NCBIfam" id="TIGR00342">
    <property type="entry name" value="tRNA uracil 4-sulfurtransferase ThiI"/>
    <property type="match status" value="1"/>
</dbReference>
<dbReference type="PANTHER" id="PTHR43209">
    <property type="entry name" value="TRNA SULFURTRANSFERASE"/>
    <property type="match status" value="1"/>
</dbReference>
<dbReference type="PANTHER" id="PTHR43209:SF1">
    <property type="entry name" value="TRNA SULFURTRANSFERASE"/>
    <property type="match status" value="1"/>
</dbReference>
<dbReference type="Pfam" id="PF02568">
    <property type="entry name" value="ThiI"/>
    <property type="match status" value="1"/>
</dbReference>
<dbReference type="Pfam" id="PF22025">
    <property type="entry name" value="ThiI_fer"/>
    <property type="match status" value="1"/>
</dbReference>
<dbReference type="Pfam" id="PF02926">
    <property type="entry name" value="THUMP"/>
    <property type="match status" value="1"/>
</dbReference>
<dbReference type="SMART" id="SM00981">
    <property type="entry name" value="THUMP"/>
    <property type="match status" value="1"/>
</dbReference>
<dbReference type="SUPFAM" id="SSF52402">
    <property type="entry name" value="Adenine nucleotide alpha hydrolases-like"/>
    <property type="match status" value="1"/>
</dbReference>
<dbReference type="SUPFAM" id="SSF143437">
    <property type="entry name" value="THUMP domain-like"/>
    <property type="match status" value="1"/>
</dbReference>
<dbReference type="PROSITE" id="PS51165">
    <property type="entry name" value="THUMP"/>
    <property type="match status" value="1"/>
</dbReference>
<organism>
    <name type="scientific">Methanosarcina mazei (strain ATCC BAA-159 / DSM 3647 / Goe1 / Go1 / JCM 11833 / OCM 88)</name>
    <name type="common">Methanosarcina frisia</name>
    <dbReference type="NCBI Taxonomy" id="192952"/>
    <lineage>
        <taxon>Archaea</taxon>
        <taxon>Methanobacteriati</taxon>
        <taxon>Methanobacteriota</taxon>
        <taxon>Stenosarchaea group</taxon>
        <taxon>Methanomicrobia</taxon>
        <taxon>Methanosarcinales</taxon>
        <taxon>Methanosarcinaceae</taxon>
        <taxon>Methanosarcina</taxon>
    </lineage>
</organism>
<proteinExistence type="inferred from homology"/>
<feature type="chain" id="PRO_0000154895" description="Probable tRNA sulfurtransferase">
    <location>
        <begin position="1"/>
        <end position="405"/>
    </location>
</feature>
<feature type="domain" description="THUMP" evidence="1">
    <location>
        <begin position="75"/>
        <end position="183"/>
    </location>
</feature>
<feature type="binding site" evidence="1">
    <location>
        <begin position="201"/>
        <end position="202"/>
    </location>
    <ligand>
        <name>ATP</name>
        <dbReference type="ChEBI" id="CHEBI:30616"/>
    </ligand>
</feature>
<feature type="binding site" evidence="1">
    <location>
        <position position="285"/>
    </location>
    <ligand>
        <name>ATP</name>
        <dbReference type="ChEBI" id="CHEBI:30616"/>
    </ligand>
</feature>
<feature type="binding site" evidence="1">
    <location>
        <position position="307"/>
    </location>
    <ligand>
        <name>ATP</name>
        <dbReference type="ChEBI" id="CHEBI:30616"/>
    </ligand>
</feature>
<feature type="binding site" evidence="1">
    <location>
        <position position="316"/>
    </location>
    <ligand>
        <name>ATP</name>
        <dbReference type="ChEBI" id="CHEBI:30616"/>
    </ligand>
</feature>
<sequence>MQGAFTDNTNNTGSEKETNVVIVRYGELALKSPGVRNWYEKILMKNIAAMLDSKNIPYSLMRREWGRIFIETTDPRAAGAAADVFGVVSTSSALITKPELDSAAETCAFLGKKIIQEGESFAIRARRSGNHSFSSADIGRACGDAVWNMLESEGKHPKVNLGSPDREIFVEMRQNLAYVYLETVKGVGGLPLGTQGKMVVLMSGGLDSPVAAWLMMKRGVMIIPVYCNTSPYAENAAKERAYDCIRQLQTWASGHQFTTYEIPHGPNLRSFIEMCDRKNTCLLCKRMMYREAYEIMKKEGASGIITGSSLGQVASQTAANMHAEIYQLAIPIYHPLIAFDKSEIIDIARKIGTYDISTRSAGSCTAVPERPEVKANYDLIVLEEKRLDIENMVSEALKAAKVLKL</sequence>